<accession>Q81TV2</accession>
<accession>Q6I236</accession>
<accession>Q6KVX2</accession>
<comment type="subcellular location">
    <subcellularLocation>
        <location evidence="1">Cell membrane</location>
        <topology evidence="1">Multi-pass membrane protein</topology>
    </subcellularLocation>
</comment>
<comment type="similarity">
    <text evidence="1">Belongs to the UPF0344 family.</text>
</comment>
<sequence length="121" mass="13465">MVHMHITAWALGLILFFVAYSLYSAGRKGKGVHMGLRLMYIIIIVTGFMLYMGIMKTATSNMHMWYGLKMIAGILVIGGMEMVLVKMSKNKATGAVWGLFIVALVAVFYLGLKLPIGWQVF</sequence>
<dbReference type="EMBL" id="AE016879">
    <property type="protein sequence ID" value="AAP25123.1"/>
    <property type="molecule type" value="Genomic_DNA"/>
</dbReference>
<dbReference type="EMBL" id="AE017334">
    <property type="protein sequence ID" value="AAT30246.1"/>
    <property type="molecule type" value="Genomic_DNA"/>
</dbReference>
<dbReference type="EMBL" id="AE017225">
    <property type="protein sequence ID" value="AAT53395.1"/>
    <property type="molecule type" value="Genomic_DNA"/>
</dbReference>
<dbReference type="RefSeq" id="NP_843637.1">
    <property type="nucleotide sequence ID" value="NC_003997.3"/>
</dbReference>
<dbReference type="RefSeq" id="WP_000233490.1">
    <property type="nucleotide sequence ID" value="NZ_WXXJ01000044.1"/>
</dbReference>
<dbReference type="RefSeq" id="YP_027344.1">
    <property type="nucleotide sequence ID" value="NC_005945.1"/>
</dbReference>
<dbReference type="STRING" id="261594.GBAA_1155"/>
<dbReference type="DNASU" id="1083975"/>
<dbReference type="KEGG" id="ban:BA_1155"/>
<dbReference type="KEGG" id="bar:GBAA_1155"/>
<dbReference type="KEGG" id="bat:BAS1072"/>
<dbReference type="PATRIC" id="fig|198094.11.peg.1135"/>
<dbReference type="HOGENOM" id="CLU_146641_1_1_9"/>
<dbReference type="OMA" id="HMHIASW"/>
<dbReference type="OrthoDB" id="2365314at2"/>
<dbReference type="Proteomes" id="UP000000427">
    <property type="component" value="Chromosome"/>
</dbReference>
<dbReference type="Proteomes" id="UP000000594">
    <property type="component" value="Chromosome"/>
</dbReference>
<dbReference type="GO" id="GO:0005886">
    <property type="term" value="C:plasma membrane"/>
    <property type="evidence" value="ECO:0007669"/>
    <property type="project" value="UniProtKB-SubCell"/>
</dbReference>
<dbReference type="HAMAP" id="MF_01536">
    <property type="entry name" value="UPF0344"/>
    <property type="match status" value="1"/>
</dbReference>
<dbReference type="InterPro" id="IPR010899">
    <property type="entry name" value="UPF0344"/>
</dbReference>
<dbReference type="NCBIfam" id="NF010194">
    <property type="entry name" value="PRK13673.1-1"/>
    <property type="match status" value="1"/>
</dbReference>
<dbReference type="Pfam" id="PF07457">
    <property type="entry name" value="DUF1516"/>
    <property type="match status" value="1"/>
</dbReference>
<name>Y1155_BACAN</name>
<organism>
    <name type="scientific">Bacillus anthracis</name>
    <dbReference type="NCBI Taxonomy" id="1392"/>
    <lineage>
        <taxon>Bacteria</taxon>
        <taxon>Bacillati</taxon>
        <taxon>Bacillota</taxon>
        <taxon>Bacilli</taxon>
        <taxon>Bacillales</taxon>
        <taxon>Bacillaceae</taxon>
        <taxon>Bacillus</taxon>
        <taxon>Bacillus cereus group</taxon>
    </lineage>
</organism>
<gene>
    <name type="ordered locus">BA_1155</name>
    <name type="ordered locus">GBAA_1155</name>
    <name type="ordered locus">BAS1072</name>
</gene>
<reference key="1">
    <citation type="journal article" date="2003" name="Nature">
        <title>The genome sequence of Bacillus anthracis Ames and comparison to closely related bacteria.</title>
        <authorList>
            <person name="Read T.D."/>
            <person name="Peterson S.N."/>
            <person name="Tourasse N.J."/>
            <person name="Baillie L.W."/>
            <person name="Paulsen I.T."/>
            <person name="Nelson K.E."/>
            <person name="Tettelin H."/>
            <person name="Fouts D.E."/>
            <person name="Eisen J.A."/>
            <person name="Gill S.R."/>
            <person name="Holtzapple E.K."/>
            <person name="Okstad O.A."/>
            <person name="Helgason E."/>
            <person name="Rilstone J."/>
            <person name="Wu M."/>
            <person name="Kolonay J.F."/>
            <person name="Beanan M.J."/>
            <person name="Dodson R.J."/>
            <person name="Brinkac L.M."/>
            <person name="Gwinn M.L."/>
            <person name="DeBoy R.T."/>
            <person name="Madpu R."/>
            <person name="Daugherty S.C."/>
            <person name="Durkin A.S."/>
            <person name="Haft D.H."/>
            <person name="Nelson W.C."/>
            <person name="Peterson J.D."/>
            <person name="Pop M."/>
            <person name="Khouri H.M."/>
            <person name="Radune D."/>
            <person name="Benton J.L."/>
            <person name="Mahamoud Y."/>
            <person name="Jiang L."/>
            <person name="Hance I.R."/>
            <person name="Weidman J.F."/>
            <person name="Berry K.J."/>
            <person name="Plaut R.D."/>
            <person name="Wolf A.M."/>
            <person name="Watkins K.L."/>
            <person name="Nierman W.C."/>
            <person name="Hazen A."/>
            <person name="Cline R.T."/>
            <person name="Redmond C."/>
            <person name="Thwaite J.E."/>
            <person name="White O."/>
            <person name="Salzberg S.L."/>
            <person name="Thomason B."/>
            <person name="Friedlander A.M."/>
            <person name="Koehler T.M."/>
            <person name="Hanna P.C."/>
            <person name="Kolstoe A.-B."/>
            <person name="Fraser C.M."/>
        </authorList>
    </citation>
    <scope>NUCLEOTIDE SEQUENCE [LARGE SCALE GENOMIC DNA]</scope>
    <source>
        <strain>Ames / isolate Porton</strain>
    </source>
</reference>
<reference key="2">
    <citation type="journal article" date="2009" name="J. Bacteriol.">
        <title>The complete genome sequence of Bacillus anthracis Ames 'Ancestor'.</title>
        <authorList>
            <person name="Ravel J."/>
            <person name="Jiang L."/>
            <person name="Stanley S.T."/>
            <person name="Wilson M.R."/>
            <person name="Decker R.S."/>
            <person name="Read T.D."/>
            <person name="Worsham P."/>
            <person name="Keim P.S."/>
            <person name="Salzberg S.L."/>
            <person name="Fraser-Liggett C.M."/>
            <person name="Rasko D.A."/>
        </authorList>
    </citation>
    <scope>NUCLEOTIDE SEQUENCE [LARGE SCALE GENOMIC DNA]</scope>
    <source>
        <strain>Ames ancestor</strain>
    </source>
</reference>
<reference key="3">
    <citation type="submission" date="2004-01" db="EMBL/GenBank/DDBJ databases">
        <title>Complete genome sequence of Bacillus anthracis Sterne.</title>
        <authorList>
            <person name="Brettin T.S."/>
            <person name="Bruce D."/>
            <person name="Challacombe J.F."/>
            <person name="Gilna P."/>
            <person name="Han C."/>
            <person name="Hill K."/>
            <person name="Hitchcock P."/>
            <person name="Jackson P."/>
            <person name="Keim P."/>
            <person name="Longmire J."/>
            <person name="Lucas S."/>
            <person name="Okinaka R."/>
            <person name="Richardson P."/>
            <person name="Rubin E."/>
            <person name="Tice H."/>
        </authorList>
    </citation>
    <scope>NUCLEOTIDE SEQUENCE [LARGE SCALE GENOMIC DNA]</scope>
    <source>
        <strain>Sterne</strain>
    </source>
</reference>
<evidence type="ECO:0000255" key="1">
    <source>
        <dbReference type="HAMAP-Rule" id="MF_01536"/>
    </source>
</evidence>
<protein>
    <recommendedName>
        <fullName evidence="1">UPF0344 protein BA_1155/GBAA_1155/BAS1072</fullName>
    </recommendedName>
</protein>
<keyword id="KW-1003">Cell membrane</keyword>
<keyword id="KW-0472">Membrane</keyword>
<keyword id="KW-1185">Reference proteome</keyword>
<keyword id="KW-0812">Transmembrane</keyword>
<keyword id="KW-1133">Transmembrane helix</keyword>
<proteinExistence type="inferred from homology"/>
<feature type="chain" id="PRO_0000105878" description="UPF0344 protein BA_1155/GBAA_1155/BAS1072">
    <location>
        <begin position="1"/>
        <end position="121"/>
    </location>
</feature>
<feature type="transmembrane region" description="Helical" evidence="1">
    <location>
        <begin position="6"/>
        <end position="26"/>
    </location>
</feature>
<feature type="transmembrane region" description="Helical" evidence="1">
    <location>
        <begin position="38"/>
        <end position="58"/>
    </location>
</feature>
<feature type="transmembrane region" description="Helical" evidence="1">
    <location>
        <begin position="65"/>
        <end position="85"/>
    </location>
</feature>
<feature type="transmembrane region" description="Helical" evidence="1">
    <location>
        <begin position="92"/>
        <end position="112"/>
    </location>
</feature>